<name>TATA_MARMS</name>
<organism>
    <name type="scientific">Marinomonas sp. (strain MWYL1)</name>
    <dbReference type="NCBI Taxonomy" id="400668"/>
    <lineage>
        <taxon>Bacteria</taxon>
        <taxon>Pseudomonadati</taxon>
        <taxon>Pseudomonadota</taxon>
        <taxon>Gammaproteobacteria</taxon>
        <taxon>Oceanospirillales</taxon>
        <taxon>Oceanospirillaceae</taxon>
        <taxon>Marinomonas</taxon>
    </lineage>
</organism>
<feature type="chain" id="PRO_0000336632" description="Sec-independent protein translocase protein TatA">
    <location>
        <begin position="1"/>
        <end position="72"/>
    </location>
</feature>
<feature type="transmembrane region" description="Helical" evidence="1">
    <location>
        <begin position="1"/>
        <end position="21"/>
    </location>
</feature>
<accession>A6VT98</accession>
<protein>
    <recommendedName>
        <fullName evidence="1">Sec-independent protein translocase protein TatA</fullName>
    </recommendedName>
</protein>
<proteinExistence type="inferred from homology"/>
<reference key="1">
    <citation type="submission" date="2007-06" db="EMBL/GenBank/DDBJ databases">
        <title>Complete sequence of Marinomonas sp. MWYL1.</title>
        <authorList>
            <consortium name="US DOE Joint Genome Institute"/>
            <person name="Copeland A."/>
            <person name="Lucas S."/>
            <person name="Lapidus A."/>
            <person name="Barry K."/>
            <person name="Glavina del Rio T."/>
            <person name="Dalin E."/>
            <person name="Tice H."/>
            <person name="Pitluck S."/>
            <person name="Kiss H."/>
            <person name="Brettin T."/>
            <person name="Bruce D."/>
            <person name="Detter J.C."/>
            <person name="Han C."/>
            <person name="Schmutz J."/>
            <person name="Larimer F."/>
            <person name="Land M."/>
            <person name="Hauser L."/>
            <person name="Kyrpides N."/>
            <person name="Kim E."/>
            <person name="Johnston A.W.B."/>
            <person name="Todd J.D."/>
            <person name="Rogers R."/>
            <person name="Wexler M."/>
            <person name="Bond P.L."/>
            <person name="Li Y."/>
            <person name="Richardson P."/>
        </authorList>
    </citation>
    <scope>NUCLEOTIDE SEQUENCE [LARGE SCALE GENOMIC DNA]</scope>
    <source>
        <strain>MWYL1</strain>
    </source>
</reference>
<keyword id="KW-0997">Cell inner membrane</keyword>
<keyword id="KW-1003">Cell membrane</keyword>
<keyword id="KW-0472">Membrane</keyword>
<keyword id="KW-0653">Protein transport</keyword>
<keyword id="KW-0811">Translocation</keyword>
<keyword id="KW-0812">Transmembrane</keyword>
<keyword id="KW-1133">Transmembrane helix</keyword>
<keyword id="KW-0813">Transport</keyword>
<comment type="function">
    <text evidence="1">Part of the twin-arginine translocation (Tat) system that transports large folded proteins containing a characteristic twin-arginine motif in their signal peptide across membranes. TatA could form the protein-conducting channel of the Tat system.</text>
</comment>
<comment type="subunit">
    <text evidence="1">The Tat system comprises two distinct complexes: a TatABC complex, containing multiple copies of TatA, TatB and TatC subunits, and a separate TatA complex, containing only TatA subunits. Substrates initially bind to the TatABC complex, which probably triggers association of the separate TatA complex to form the active translocon.</text>
</comment>
<comment type="subcellular location">
    <subcellularLocation>
        <location evidence="1">Cell inner membrane</location>
        <topology evidence="1">Single-pass membrane protein</topology>
    </subcellularLocation>
</comment>
<comment type="similarity">
    <text evidence="1">Belongs to the TatA/E family.</text>
</comment>
<evidence type="ECO:0000255" key="1">
    <source>
        <dbReference type="HAMAP-Rule" id="MF_00236"/>
    </source>
</evidence>
<gene>
    <name evidence="1" type="primary">tatA</name>
    <name type="ordered locus">Mmwyl1_0743</name>
</gene>
<sequence length="72" mass="7666">MLGGISIWQLLIVLAILVLIFGTKKLKNLGSDLGGAVKGFKEAVDKDTEAEDGKTAQHKVIDADVKKDDKSA</sequence>
<dbReference type="EMBL" id="CP000749">
    <property type="protein sequence ID" value="ABR69677.1"/>
    <property type="molecule type" value="Genomic_DNA"/>
</dbReference>
<dbReference type="SMR" id="A6VT98"/>
<dbReference type="STRING" id="400668.Mmwyl1_0743"/>
<dbReference type="KEGG" id="mmw:Mmwyl1_0743"/>
<dbReference type="eggNOG" id="COG1826">
    <property type="taxonomic scope" value="Bacteria"/>
</dbReference>
<dbReference type="HOGENOM" id="CLU_086034_5_1_6"/>
<dbReference type="OrthoDB" id="7066617at2"/>
<dbReference type="GO" id="GO:0033281">
    <property type="term" value="C:TAT protein transport complex"/>
    <property type="evidence" value="ECO:0007669"/>
    <property type="project" value="UniProtKB-UniRule"/>
</dbReference>
<dbReference type="GO" id="GO:0008320">
    <property type="term" value="F:protein transmembrane transporter activity"/>
    <property type="evidence" value="ECO:0007669"/>
    <property type="project" value="UniProtKB-UniRule"/>
</dbReference>
<dbReference type="GO" id="GO:0043953">
    <property type="term" value="P:protein transport by the Tat complex"/>
    <property type="evidence" value="ECO:0007669"/>
    <property type="project" value="UniProtKB-UniRule"/>
</dbReference>
<dbReference type="Gene3D" id="1.20.5.3310">
    <property type="match status" value="1"/>
</dbReference>
<dbReference type="HAMAP" id="MF_00236">
    <property type="entry name" value="TatA_E"/>
    <property type="match status" value="1"/>
</dbReference>
<dbReference type="InterPro" id="IPR003369">
    <property type="entry name" value="TatA/B/E"/>
</dbReference>
<dbReference type="InterPro" id="IPR006312">
    <property type="entry name" value="TatA/E"/>
</dbReference>
<dbReference type="NCBIfam" id="NF002813">
    <property type="entry name" value="PRK02958.1"/>
    <property type="match status" value="1"/>
</dbReference>
<dbReference type="NCBIfam" id="TIGR01411">
    <property type="entry name" value="tatAE"/>
    <property type="match status" value="1"/>
</dbReference>
<dbReference type="PANTHER" id="PTHR42982">
    <property type="entry name" value="SEC-INDEPENDENT PROTEIN TRANSLOCASE PROTEIN TATA"/>
    <property type="match status" value="1"/>
</dbReference>
<dbReference type="PANTHER" id="PTHR42982:SF1">
    <property type="entry name" value="SEC-INDEPENDENT PROTEIN TRANSLOCASE PROTEIN TATA"/>
    <property type="match status" value="1"/>
</dbReference>
<dbReference type="Pfam" id="PF02416">
    <property type="entry name" value="TatA_B_E"/>
    <property type="match status" value="1"/>
</dbReference>